<organism>
    <name type="scientific">Parvibaculum lavamentivorans (strain DS-1 / DSM 13023 / NCIMB 13966)</name>
    <dbReference type="NCBI Taxonomy" id="402881"/>
    <lineage>
        <taxon>Bacteria</taxon>
        <taxon>Pseudomonadati</taxon>
        <taxon>Pseudomonadota</taxon>
        <taxon>Alphaproteobacteria</taxon>
        <taxon>Hyphomicrobiales</taxon>
        <taxon>Parvibaculaceae</taxon>
        <taxon>Parvibaculum</taxon>
    </lineage>
</organism>
<evidence type="ECO:0000255" key="1">
    <source>
        <dbReference type="HAMAP-Rule" id="MF_01363"/>
    </source>
</evidence>
<evidence type="ECO:0000305" key="2"/>
<sequence length="103" mass="11411">MFAVIRTGGKQYRVAKDDVLEVERNGGEAGDKIDLEVLMLGGEGGTLKVGAPLVDGAKVKAEIVEHTRGPKITIFKKRRRQNYRRKNGHRQDLMLVKILDIAG</sequence>
<reference key="1">
    <citation type="journal article" date="2011" name="Stand. Genomic Sci.">
        <title>Complete genome sequence of Parvibaculum lavamentivorans type strain (DS-1(T)).</title>
        <authorList>
            <person name="Schleheck D."/>
            <person name="Weiss M."/>
            <person name="Pitluck S."/>
            <person name="Bruce D."/>
            <person name="Land M.L."/>
            <person name="Han S."/>
            <person name="Saunders E."/>
            <person name="Tapia R."/>
            <person name="Detter C."/>
            <person name="Brettin T."/>
            <person name="Han J."/>
            <person name="Woyke T."/>
            <person name="Goodwin L."/>
            <person name="Pennacchio L."/>
            <person name="Nolan M."/>
            <person name="Cook A.M."/>
            <person name="Kjelleberg S."/>
            <person name="Thomas T."/>
        </authorList>
    </citation>
    <scope>NUCLEOTIDE SEQUENCE [LARGE SCALE GENOMIC DNA]</scope>
    <source>
        <strain>DS-1 / DSM 13023 / NCIMB 13966</strain>
    </source>
</reference>
<keyword id="KW-1185">Reference proteome</keyword>
<keyword id="KW-0687">Ribonucleoprotein</keyword>
<keyword id="KW-0689">Ribosomal protein</keyword>
<keyword id="KW-0694">RNA-binding</keyword>
<keyword id="KW-0699">rRNA-binding</keyword>
<name>RL21_PARL1</name>
<proteinExistence type="inferred from homology"/>
<comment type="function">
    <text evidence="1">This protein binds to 23S rRNA in the presence of protein L20.</text>
</comment>
<comment type="subunit">
    <text evidence="1">Part of the 50S ribosomal subunit. Contacts protein L20.</text>
</comment>
<comment type="similarity">
    <text evidence="1">Belongs to the bacterial ribosomal protein bL21 family.</text>
</comment>
<dbReference type="EMBL" id="CP000774">
    <property type="protein sequence ID" value="ABS63103.1"/>
    <property type="molecule type" value="Genomic_DNA"/>
</dbReference>
<dbReference type="RefSeq" id="WP_012110387.1">
    <property type="nucleotide sequence ID" value="NC_009719.1"/>
</dbReference>
<dbReference type="SMR" id="A7HT70"/>
<dbReference type="STRING" id="402881.Plav_1483"/>
<dbReference type="KEGG" id="pla:Plav_1483"/>
<dbReference type="eggNOG" id="COG0261">
    <property type="taxonomic scope" value="Bacteria"/>
</dbReference>
<dbReference type="HOGENOM" id="CLU_061463_3_2_5"/>
<dbReference type="OrthoDB" id="9813334at2"/>
<dbReference type="Proteomes" id="UP000006377">
    <property type="component" value="Chromosome"/>
</dbReference>
<dbReference type="GO" id="GO:0005737">
    <property type="term" value="C:cytoplasm"/>
    <property type="evidence" value="ECO:0007669"/>
    <property type="project" value="UniProtKB-ARBA"/>
</dbReference>
<dbReference type="GO" id="GO:1990904">
    <property type="term" value="C:ribonucleoprotein complex"/>
    <property type="evidence" value="ECO:0007669"/>
    <property type="project" value="UniProtKB-KW"/>
</dbReference>
<dbReference type="GO" id="GO:0005840">
    <property type="term" value="C:ribosome"/>
    <property type="evidence" value="ECO:0007669"/>
    <property type="project" value="UniProtKB-KW"/>
</dbReference>
<dbReference type="GO" id="GO:0019843">
    <property type="term" value="F:rRNA binding"/>
    <property type="evidence" value="ECO:0007669"/>
    <property type="project" value="UniProtKB-UniRule"/>
</dbReference>
<dbReference type="GO" id="GO:0003735">
    <property type="term" value="F:structural constituent of ribosome"/>
    <property type="evidence" value="ECO:0007669"/>
    <property type="project" value="InterPro"/>
</dbReference>
<dbReference type="GO" id="GO:0006412">
    <property type="term" value="P:translation"/>
    <property type="evidence" value="ECO:0007669"/>
    <property type="project" value="UniProtKB-UniRule"/>
</dbReference>
<dbReference type="HAMAP" id="MF_01363">
    <property type="entry name" value="Ribosomal_bL21"/>
    <property type="match status" value="1"/>
</dbReference>
<dbReference type="InterPro" id="IPR028909">
    <property type="entry name" value="bL21-like"/>
</dbReference>
<dbReference type="InterPro" id="IPR036164">
    <property type="entry name" value="bL21-like_sf"/>
</dbReference>
<dbReference type="InterPro" id="IPR001787">
    <property type="entry name" value="Ribosomal_bL21"/>
</dbReference>
<dbReference type="NCBIfam" id="TIGR00061">
    <property type="entry name" value="L21"/>
    <property type="match status" value="1"/>
</dbReference>
<dbReference type="PANTHER" id="PTHR21349">
    <property type="entry name" value="50S RIBOSOMAL PROTEIN L21"/>
    <property type="match status" value="1"/>
</dbReference>
<dbReference type="PANTHER" id="PTHR21349:SF0">
    <property type="entry name" value="LARGE RIBOSOMAL SUBUNIT PROTEIN BL21M"/>
    <property type="match status" value="1"/>
</dbReference>
<dbReference type="Pfam" id="PF00829">
    <property type="entry name" value="Ribosomal_L21p"/>
    <property type="match status" value="1"/>
</dbReference>
<dbReference type="SUPFAM" id="SSF141091">
    <property type="entry name" value="L21p-like"/>
    <property type="match status" value="1"/>
</dbReference>
<gene>
    <name evidence="1" type="primary">rplU</name>
    <name type="ordered locus">Plav_1483</name>
</gene>
<protein>
    <recommendedName>
        <fullName evidence="1">Large ribosomal subunit protein bL21</fullName>
    </recommendedName>
    <alternativeName>
        <fullName evidence="2">50S ribosomal protein L21</fullName>
    </alternativeName>
</protein>
<accession>A7HT70</accession>
<feature type="chain" id="PRO_1000073388" description="Large ribosomal subunit protein bL21">
    <location>
        <begin position="1"/>
        <end position="103"/>
    </location>
</feature>